<accession>P47418</accession>
<reference key="1">
    <citation type="journal article" date="1995" name="Science">
        <title>The minimal gene complement of Mycoplasma genitalium.</title>
        <authorList>
            <person name="Fraser C.M."/>
            <person name="Gocayne J.D."/>
            <person name="White O."/>
            <person name="Adams M.D."/>
            <person name="Clayton R.A."/>
            <person name="Fleischmann R.D."/>
            <person name="Bult C.J."/>
            <person name="Kerlavage A.R."/>
            <person name="Sutton G.G."/>
            <person name="Kelley J.M."/>
            <person name="Fritchman J.L."/>
            <person name="Weidman J.F."/>
            <person name="Small K.V."/>
            <person name="Sandusky M."/>
            <person name="Fuhrmann J.L."/>
            <person name="Nguyen D.T."/>
            <person name="Utterback T.R."/>
            <person name="Saudek D.M."/>
            <person name="Phillips C.A."/>
            <person name="Merrick J.M."/>
            <person name="Tomb J.-F."/>
            <person name="Dougherty B.A."/>
            <person name="Bott K.F."/>
            <person name="Hu P.-C."/>
            <person name="Lucier T.S."/>
            <person name="Peterson S.N."/>
            <person name="Smith H.O."/>
            <person name="Hutchison C.A. III"/>
            <person name="Venter J.C."/>
        </authorList>
    </citation>
    <scope>NUCLEOTIDE SEQUENCE [LARGE SCALE GENOMIC DNA]</scope>
    <source>
        <strain>ATCC 33530 / DSM 19775 / NCTC 10195 / G37</strain>
    </source>
</reference>
<evidence type="ECO:0000255" key="1">
    <source>
        <dbReference type="HAMAP-Rule" id="MF_01974"/>
    </source>
</evidence>
<proteinExistence type="inferred from homology"/>
<feature type="chain" id="PRO_0000148946" description="Methionine aminopeptidase">
    <location>
        <begin position="1"/>
        <end position="248"/>
    </location>
</feature>
<feature type="binding site" evidence="1">
    <location>
        <position position="77"/>
    </location>
    <ligand>
        <name>substrate</name>
    </ligand>
</feature>
<feature type="binding site" evidence="1">
    <location>
        <position position="94"/>
    </location>
    <ligand>
        <name>a divalent metal cation</name>
        <dbReference type="ChEBI" id="CHEBI:60240"/>
        <label>1</label>
    </ligand>
</feature>
<feature type="binding site" evidence="1">
    <location>
        <position position="105"/>
    </location>
    <ligand>
        <name>a divalent metal cation</name>
        <dbReference type="ChEBI" id="CHEBI:60240"/>
        <label>1</label>
    </ligand>
</feature>
<feature type="binding site" evidence="1">
    <location>
        <position position="105"/>
    </location>
    <ligand>
        <name>a divalent metal cation</name>
        <dbReference type="ChEBI" id="CHEBI:60240"/>
        <label>2</label>
        <note>catalytic</note>
    </ligand>
</feature>
<feature type="binding site" evidence="1">
    <location>
        <position position="169"/>
    </location>
    <ligand>
        <name>a divalent metal cation</name>
        <dbReference type="ChEBI" id="CHEBI:60240"/>
        <label>2</label>
        <note>catalytic</note>
    </ligand>
</feature>
<feature type="binding site" evidence="1">
    <location>
        <position position="176"/>
    </location>
    <ligand>
        <name>substrate</name>
    </ligand>
</feature>
<feature type="binding site" evidence="1">
    <location>
        <position position="202"/>
    </location>
    <ligand>
        <name>a divalent metal cation</name>
        <dbReference type="ChEBI" id="CHEBI:60240"/>
        <label>2</label>
        <note>catalytic</note>
    </ligand>
</feature>
<feature type="binding site" evidence="1">
    <location>
        <position position="233"/>
    </location>
    <ligand>
        <name>a divalent metal cation</name>
        <dbReference type="ChEBI" id="CHEBI:60240"/>
        <label>1</label>
    </ligand>
</feature>
<feature type="binding site" evidence="1">
    <location>
        <position position="233"/>
    </location>
    <ligand>
        <name>a divalent metal cation</name>
        <dbReference type="ChEBI" id="CHEBI:60240"/>
        <label>2</label>
        <note>catalytic</note>
    </ligand>
</feature>
<organism>
    <name type="scientific">Mycoplasma genitalium (strain ATCC 33530 / DSM 19775 / NCTC 10195 / G37)</name>
    <name type="common">Mycoplasmoides genitalium</name>
    <dbReference type="NCBI Taxonomy" id="243273"/>
    <lineage>
        <taxon>Bacteria</taxon>
        <taxon>Bacillati</taxon>
        <taxon>Mycoplasmatota</taxon>
        <taxon>Mycoplasmoidales</taxon>
        <taxon>Mycoplasmoidaceae</taxon>
        <taxon>Mycoplasmoides</taxon>
    </lineage>
</organism>
<name>MAP1_MYCGE</name>
<comment type="function">
    <text evidence="1">Removes the N-terminal methionine from nascent proteins. The N-terminal methionine is often cleaved when the second residue in the primary sequence is small and uncharged (Met-Ala-, Cys, Gly, Pro, Ser, Thr, or Val). Requires deformylation of the N(alpha)-formylated initiator methionine before it can be hydrolyzed.</text>
</comment>
<comment type="catalytic activity">
    <reaction evidence="1">
        <text>Release of N-terminal amino acids, preferentially methionine, from peptides and arylamides.</text>
        <dbReference type="EC" id="3.4.11.18"/>
    </reaction>
</comment>
<comment type="cofactor">
    <cofactor evidence="1">
        <name>Co(2+)</name>
        <dbReference type="ChEBI" id="CHEBI:48828"/>
    </cofactor>
    <cofactor evidence="1">
        <name>Zn(2+)</name>
        <dbReference type="ChEBI" id="CHEBI:29105"/>
    </cofactor>
    <cofactor evidence="1">
        <name>Mn(2+)</name>
        <dbReference type="ChEBI" id="CHEBI:29035"/>
    </cofactor>
    <cofactor evidence="1">
        <name>Fe(2+)</name>
        <dbReference type="ChEBI" id="CHEBI:29033"/>
    </cofactor>
    <text evidence="1">Binds 2 divalent metal cations per subunit. Has a high-affinity and a low affinity metal-binding site. The true nature of the physiological cofactor is under debate. The enzyme is active with cobalt, zinc, manganese or divalent iron ions. Most likely, methionine aminopeptidases function as mononuclear Fe(2+)-metalloproteases under physiological conditions, and the catalytically relevant metal-binding site has been assigned to the histidine-containing high-affinity site.</text>
</comment>
<comment type="subunit">
    <text evidence="1">Monomer.</text>
</comment>
<comment type="similarity">
    <text evidence="1">Belongs to the peptidase M24A family. Methionine aminopeptidase type 1 subfamily.</text>
</comment>
<keyword id="KW-0031">Aminopeptidase</keyword>
<keyword id="KW-0378">Hydrolase</keyword>
<keyword id="KW-0479">Metal-binding</keyword>
<keyword id="KW-0645">Protease</keyword>
<keyword id="KW-1185">Reference proteome</keyword>
<protein>
    <recommendedName>
        <fullName evidence="1">Methionine aminopeptidase</fullName>
        <shortName evidence="1">MAP</shortName>
        <shortName evidence="1">MetAP</shortName>
        <ecNumber evidence="1">3.4.11.18</ecNumber>
    </recommendedName>
    <alternativeName>
        <fullName evidence="1">Peptidase M</fullName>
    </alternativeName>
</protein>
<gene>
    <name evidence="1" type="primary">map</name>
    <name type="ordered locus">MG172</name>
</gene>
<sequence length="248" mass="27738">MIYLKSANEVAGIKKACAIFKAVKAYFTIEKLLGKKLVTIDRLIKQFIEQKQAKCAFHGYLGFPGFNCLSLNQTVIHGVADQTVFKDSDKLTLDIGIDYHGYLCDAAFTLLGNKADPKAVKLLNDVEQAFSKVIEPELFVNNPIGNLSNAIQTYFENKGYFLVKEFGGHGCGIKIHEDPLILNWGEKNQGVRLQEGMVICIEPMVMTDSSEITMAANNWNVLTLKSKFNCHVEQMYHITNNGFECLTN</sequence>
<dbReference type="EC" id="3.4.11.18" evidence="1"/>
<dbReference type="EMBL" id="L43967">
    <property type="protein sequence ID" value="AAC71390.1"/>
    <property type="molecule type" value="Genomic_DNA"/>
</dbReference>
<dbReference type="PIR" id="A64219">
    <property type="entry name" value="A64219"/>
</dbReference>
<dbReference type="RefSeq" id="WP_009885857.1">
    <property type="nucleotide sequence ID" value="NC_000908.2"/>
</dbReference>
<dbReference type="SMR" id="P47418"/>
<dbReference type="FunCoup" id="P47418">
    <property type="interactions" value="178"/>
</dbReference>
<dbReference type="STRING" id="243273.MG_172"/>
<dbReference type="GeneID" id="88282305"/>
<dbReference type="KEGG" id="mge:MG_172"/>
<dbReference type="eggNOG" id="COG0024">
    <property type="taxonomic scope" value="Bacteria"/>
</dbReference>
<dbReference type="HOGENOM" id="CLU_015857_0_1_14"/>
<dbReference type="InParanoid" id="P47418"/>
<dbReference type="OrthoDB" id="9802055at2"/>
<dbReference type="BioCyc" id="MGEN243273:G1GJ2-196-MONOMER"/>
<dbReference type="Proteomes" id="UP000000807">
    <property type="component" value="Chromosome"/>
</dbReference>
<dbReference type="GO" id="GO:0005829">
    <property type="term" value="C:cytosol"/>
    <property type="evidence" value="ECO:0000318"/>
    <property type="project" value="GO_Central"/>
</dbReference>
<dbReference type="GO" id="GO:0004239">
    <property type="term" value="F:initiator methionyl aminopeptidase activity"/>
    <property type="evidence" value="ECO:0007669"/>
    <property type="project" value="UniProtKB-UniRule"/>
</dbReference>
<dbReference type="GO" id="GO:0046872">
    <property type="term" value="F:metal ion binding"/>
    <property type="evidence" value="ECO:0007669"/>
    <property type="project" value="UniProtKB-UniRule"/>
</dbReference>
<dbReference type="GO" id="GO:0070006">
    <property type="term" value="F:metalloaminopeptidase activity"/>
    <property type="evidence" value="ECO:0000318"/>
    <property type="project" value="GO_Central"/>
</dbReference>
<dbReference type="GO" id="GO:0006508">
    <property type="term" value="P:proteolysis"/>
    <property type="evidence" value="ECO:0007669"/>
    <property type="project" value="UniProtKB-KW"/>
</dbReference>
<dbReference type="CDD" id="cd01086">
    <property type="entry name" value="MetAP1"/>
    <property type="match status" value="1"/>
</dbReference>
<dbReference type="Gene3D" id="3.90.230.10">
    <property type="entry name" value="Creatinase/methionine aminopeptidase superfamily"/>
    <property type="match status" value="1"/>
</dbReference>
<dbReference type="HAMAP" id="MF_01974">
    <property type="entry name" value="MetAP_1"/>
    <property type="match status" value="1"/>
</dbReference>
<dbReference type="InterPro" id="IPR036005">
    <property type="entry name" value="Creatinase/aminopeptidase-like"/>
</dbReference>
<dbReference type="InterPro" id="IPR000994">
    <property type="entry name" value="Pept_M24"/>
</dbReference>
<dbReference type="InterPro" id="IPR001714">
    <property type="entry name" value="Pept_M24_MAP"/>
</dbReference>
<dbReference type="InterPro" id="IPR002467">
    <property type="entry name" value="Pept_M24A_MAP1"/>
</dbReference>
<dbReference type="NCBIfam" id="TIGR00500">
    <property type="entry name" value="met_pdase_I"/>
    <property type="match status" value="1"/>
</dbReference>
<dbReference type="PANTHER" id="PTHR43330">
    <property type="entry name" value="METHIONINE AMINOPEPTIDASE"/>
    <property type="match status" value="1"/>
</dbReference>
<dbReference type="PANTHER" id="PTHR43330:SF27">
    <property type="entry name" value="METHIONINE AMINOPEPTIDASE"/>
    <property type="match status" value="1"/>
</dbReference>
<dbReference type="Pfam" id="PF00557">
    <property type="entry name" value="Peptidase_M24"/>
    <property type="match status" value="1"/>
</dbReference>
<dbReference type="PRINTS" id="PR00599">
    <property type="entry name" value="MAPEPTIDASE"/>
</dbReference>
<dbReference type="SUPFAM" id="SSF55920">
    <property type="entry name" value="Creatinase/aminopeptidase"/>
    <property type="match status" value="1"/>
</dbReference>
<dbReference type="PROSITE" id="PS00680">
    <property type="entry name" value="MAP_1"/>
    <property type="match status" value="1"/>
</dbReference>